<evidence type="ECO:0000255" key="1">
    <source>
        <dbReference type="HAMAP-Rule" id="MF_00009"/>
    </source>
</evidence>
<accession>A6QHB3</accession>
<sequence>MFTIDFSDHTGLVKDAWYKQIEDLLEFAKKEEHIEDDAELSVTFVDKQEIQEINRTYRDKDKVTDVISFALEEDEPEIDFSGLDIPRVLGDIIICTDVAQEQANNYGHSFERELGFLALHGFLHLLGYDHMTEADEKEMFGRQDTILNAYGLTRD</sequence>
<reference key="1">
    <citation type="journal article" date="2008" name="J. Bacteriol.">
        <title>Genome sequence of Staphylococcus aureus strain Newman and comparative analysis of staphylococcal genomes: polymorphism and evolution of two major pathogenicity islands.</title>
        <authorList>
            <person name="Baba T."/>
            <person name="Bae T."/>
            <person name="Schneewind O."/>
            <person name="Takeuchi F."/>
            <person name="Hiramatsu K."/>
        </authorList>
    </citation>
    <scope>NUCLEOTIDE SEQUENCE [LARGE SCALE GENOMIC DNA]</scope>
    <source>
        <strain>Newman</strain>
    </source>
</reference>
<organism>
    <name type="scientific">Staphylococcus aureus (strain Newman)</name>
    <dbReference type="NCBI Taxonomy" id="426430"/>
    <lineage>
        <taxon>Bacteria</taxon>
        <taxon>Bacillati</taxon>
        <taxon>Bacillota</taxon>
        <taxon>Bacilli</taxon>
        <taxon>Bacillales</taxon>
        <taxon>Staphylococcaceae</taxon>
        <taxon>Staphylococcus</taxon>
    </lineage>
</organism>
<dbReference type="EC" id="3.1.-.-" evidence="1"/>
<dbReference type="EMBL" id="AP009351">
    <property type="protein sequence ID" value="BAF67745.1"/>
    <property type="molecule type" value="Genomic_DNA"/>
</dbReference>
<dbReference type="RefSeq" id="WP_000494134.1">
    <property type="nucleotide sequence ID" value="NZ_JBBIAE010000001.1"/>
</dbReference>
<dbReference type="SMR" id="A6QHB3"/>
<dbReference type="KEGG" id="sae:NWMN_1473"/>
<dbReference type="HOGENOM" id="CLU_106710_3_0_9"/>
<dbReference type="Proteomes" id="UP000006386">
    <property type="component" value="Chromosome"/>
</dbReference>
<dbReference type="GO" id="GO:0005737">
    <property type="term" value="C:cytoplasm"/>
    <property type="evidence" value="ECO:0007669"/>
    <property type="project" value="UniProtKB-SubCell"/>
</dbReference>
<dbReference type="GO" id="GO:0004222">
    <property type="term" value="F:metalloendopeptidase activity"/>
    <property type="evidence" value="ECO:0007669"/>
    <property type="project" value="InterPro"/>
</dbReference>
<dbReference type="GO" id="GO:0004521">
    <property type="term" value="F:RNA endonuclease activity"/>
    <property type="evidence" value="ECO:0007669"/>
    <property type="project" value="UniProtKB-UniRule"/>
</dbReference>
<dbReference type="GO" id="GO:0008270">
    <property type="term" value="F:zinc ion binding"/>
    <property type="evidence" value="ECO:0007669"/>
    <property type="project" value="UniProtKB-UniRule"/>
</dbReference>
<dbReference type="GO" id="GO:0006364">
    <property type="term" value="P:rRNA processing"/>
    <property type="evidence" value="ECO:0007669"/>
    <property type="project" value="UniProtKB-UniRule"/>
</dbReference>
<dbReference type="Gene3D" id="3.40.390.30">
    <property type="entry name" value="Metalloproteases ('zincins'), catalytic domain"/>
    <property type="match status" value="1"/>
</dbReference>
<dbReference type="HAMAP" id="MF_00009">
    <property type="entry name" value="Endoribonucl_YbeY"/>
    <property type="match status" value="1"/>
</dbReference>
<dbReference type="InterPro" id="IPR023091">
    <property type="entry name" value="MetalPrtase_cat_dom_sf_prd"/>
</dbReference>
<dbReference type="InterPro" id="IPR002036">
    <property type="entry name" value="YbeY"/>
</dbReference>
<dbReference type="InterPro" id="IPR020549">
    <property type="entry name" value="YbeY_CS"/>
</dbReference>
<dbReference type="NCBIfam" id="TIGR00043">
    <property type="entry name" value="rRNA maturation RNase YbeY"/>
    <property type="match status" value="1"/>
</dbReference>
<dbReference type="PANTHER" id="PTHR46986">
    <property type="entry name" value="ENDORIBONUCLEASE YBEY, CHLOROPLASTIC"/>
    <property type="match status" value="1"/>
</dbReference>
<dbReference type="PANTHER" id="PTHR46986:SF1">
    <property type="entry name" value="ENDORIBONUCLEASE YBEY, CHLOROPLASTIC"/>
    <property type="match status" value="1"/>
</dbReference>
<dbReference type="Pfam" id="PF02130">
    <property type="entry name" value="YbeY"/>
    <property type="match status" value="1"/>
</dbReference>
<dbReference type="SUPFAM" id="SSF55486">
    <property type="entry name" value="Metalloproteases ('zincins'), catalytic domain"/>
    <property type="match status" value="1"/>
</dbReference>
<dbReference type="PROSITE" id="PS01306">
    <property type="entry name" value="UPF0054"/>
    <property type="match status" value="1"/>
</dbReference>
<gene>
    <name evidence="1" type="primary">ybeY</name>
    <name type="ordered locus">NWMN_1473</name>
</gene>
<protein>
    <recommendedName>
        <fullName evidence="1">Endoribonuclease YbeY</fullName>
        <ecNumber evidence="1">3.1.-.-</ecNumber>
    </recommendedName>
</protein>
<comment type="function">
    <text evidence="1">Single strand-specific metallo-endoribonuclease involved in late-stage 70S ribosome quality control and in maturation of the 3' terminus of the 16S rRNA.</text>
</comment>
<comment type="cofactor">
    <cofactor evidence="1">
        <name>Zn(2+)</name>
        <dbReference type="ChEBI" id="CHEBI:29105"/>
    </cofactor>
    <text evidence="1">Binds 1 zinc ion.</text>
</comment>
<comment type="subcellular location">
    <subcellularLocation>
        <location evidence="1">Cytoplasm</location>
    </subcellularLocation>
</comment>
<comment type="similarity">
    <text evidence="1">Belongs to the endoribonuclease YbeY family.</text>
</comment>
<feature type="chain" id="PRO_1000070933" description="Endoribonuclease YbeY">
    <location>
        <begin position="1"/>
        <end position="155"/>
    </location>
</feature>
<feature type="binding site" evidence="1">
    <location>
        <position position="120"/>
    </location>
    <ligand>
        <name>Zn(2+)</name>
        <dbReference type="ChEBI" id="CHEBI:29105"/>
        <note>catalytic</note>
    </ligand>
</feature>
<feature type="binding site" evidence="1">
    <location>
        <position position="124"/>
    </location>
    <ligand>
        <name>Zn(2+)</name>
        <dbReference type="ChEBI" id="CHEBI:29105"/>
        <note>catalytic</note>
    </ligand>
</feature>
<feature type="binding site" evidence="1">
    <location>
        <position position="130"/>
    </location>
    <ligand>
        <name>Zn(2+)</name>
        <dbReference type="ChEBI" id="CHEBI:29105"/>
        <note>catalytic</note>
    </ligand>
</feature>
<name>YBEY_STAAE</name>
<keyword id="KW-0963">Cytoplasm</keyword>
<keyword id="KW-0255">Endonuclease</keyword>
<keyword id="KW-0378">Hydrolase</keyword>
<keyword id="KW-0479">Metal-binding</keyword>
<keyword id="KW-0540">Nuclease</keyword>
<keyword id="KW-0690">Ribosome biogenesis</keyword>
<keyword id="KW-0698">rRNA processing</keyword>
<keyword id="KW-0862">Zinc</keyword>
<proteinExistence type="inferred from homology"/>